<proteinExistence type="inferred from homology"/>
<organism>
    <name type="scientific">Streptococcus pneumoniae (strain CGSP14)</name>
    <dbReference type="NCBI Taxonomy" id="516950"/>
    <lineage>
        <taxon>Bacteria</taxon>
        <taxon>Bacillati</taxon>
        <taxon>Bacillota</taxon>
        <taxon>Bacilli</taxon>
        <taxon>Lactobacillales</taxon>
        <taxon>Streptococcaceae</taxon>
        <taxon>Streptococcus</taxon>
    </lineage>
</organism>
<evidence type="ECO:0000255" key="1">
    <source>
        <dbReference type="HAMAP-Rule" id="MF_00052"/>
    </source>
</evidence>
<evidence type="ECO:0000255" key="2">
    <source>
        <dbReference type="PROSITE-ProRule" id="PRU01319"/>
    </source>
</evidence>
<keyword id="KW-0963">Cytoplasm</keyword>
<keyword id="KW-0255">Endonuclease</keyword>
<keyword id="KW-0378">Hydrolase</keyword>
<keyword id="KW-0464">Manganese</keyword>
<keyword id="KW-0479">Metal-binding</keyword>
<keyword id="KW-0540">Nuclease</keyword>
<comment type="function">
    <text evidence="1">Endonuclease that specifically degrades the RNA of RNA-DNA hybrids.</text>
</comment>
<comment type="catalytic activity">
    <reaction evidence="1">
        <text>Endonucleolytic cleavage to 5'-phosphomonoester.</text>
        <dbReference type="EC" id="3.1.26.4"/>
    </reaction>
</comment>
<comment type="cofactor">
    <cofactor evidence="1">
        <name>Mn(2+)</name>
        <dbReference type="ChEBI" id="CHEBI:29035"/>
    </cofactor>
    <cofactor evidence="1">
        <name>Mg(2+)</name>
        <dbReference type="ChEBI" id="CHEBI:18420"/>
    </cofactor>
    <text evidence="1">Manganese or magnesium. Binds 1 divalent metal ion per monomer in the absence of substrate. May bind a second metal ion after substrate binding.</text>
</comment>
<comment type="subcellular location">
    <subcellularLocation>
        <location evidence="1">Cytoplasm</location>
    </subcellularLocation>
</comment>
<comment type="similarity">
    <text evidence="1">Belongs to the RNase HII family.</text>
</comment>
<gene>
    <name evidence="1" type="primary">rnhB</name>
    <name type="ordered locus">SPCG_1140</name>
</gene>
<sequence length="259" mass="28486">MATIKEIKELLVTVKELESPIFLELEKDNRSGVQKEISKRKRAIQAELDENLRLESMLSYEKELYKQGLTLIAGIDEVGRGPLAGPVVAAAVILPKNCKIKGLNDSKKIPKKKHLEIFQAVQDQALSIGIGIIDNQVIDQVNIYEATKLAMQEAISQLSPQPEHLLIDAMKLDLPISQTSIIKGDANSLSIAAASIVAKVTRDELMKEYDQQFPGYDFATNAGYGTAKHLEGLTKLGVTPIHRTSFEPVKSLVLGKKES</sequence>
<feature type="chain" id="PRO_1000091661" description="Ribonuclease HII">
    <location>
        <begin position="1"/>
        <end position="259"/>
    </location>
</feature>
<feature type="domain" description="RNase H type-2" evidence="2">
    <location>
        <begin position="70"/>
        <end position="258"/>
    </location>
</feature>
<feature type="binding site" evidence="1">
    <location>
        <position position="76"/>
    </location>
    <ligand>
        <name>a divalent metal cation</name>
        <dbReference type="ChEBI" id="CHEBI:60240"/>
    </ligand>
</feature>
<feature type="binding site" evidence="1">
    <location>
        <position position="77"/>
    </location>
    <ligand>
        <name>a divalent metal cation</name>
        <dbReference type="ChEBI" id="CHEBI:60240"/>
    </ligand>
</feature>
<feature type="binding site" evidence="1">
    <location>
        <position position="168"/>
    </location>
    <ligand>
        <name>a divalent metal cation</name>
        <dbReference type="ChEBI" id="CHEBI:60240"/>
    </ligand>
</feature>
<dbReference type="EC" id="3.1.26.4" evidence="1"/>
<dbReference type="EMBL" id="CP001033">
    <property type="protein sequence ID" value="ACB90392.1"/>
    <property type="molecule type" value="Genomic_DNA"/>
</dbReference>
<dbReference type="RefSeq" id="WP_000201133.1">
    <property type="nucleotide sequence ID" value="NC_010582.1"/>
</dbReference>
<dbReference type="SMR" id="B2IPW8"/>
<dbReference type="KEGG" id="spw:SPCG_1140"/>
<dbReference type="HOGENOM" id="CLU_036532_2_1_9"/>
<dbReference type="GO" id="GO:0005737">
    <property type="term" value="C:cytoplasm"/>
    <property type="evidence" value="ECO:0007669"/>
    <property type="project" value="UniProtKB-SubCell"/>
</dbReference>
<dbReference type="GO" id="GO:0032299">
    <property type="term" value="C:ribonuclease H2 complex"/>
    <property type="evidence" value="ECO:0007669"/>
    <property type="project" value="TreeGrafter"/>
</dbReference>
<dbReference type="GO" id="GO:0030145">
    <property type="term" value="F:manganese ion binding"/>
    <property type="evidence" value="ECO:0007669"/>
    <property type="project" value="UniProtKB-UniRule"/>
</dbReference>
<dbReference type="GO" id="GO:0003723">
    <property type="term" value="F:RNA binding"/>
    <property type="evidence" value="ECO:0007669"/>
    <property type="project" value="InterPro"/>
</dbReference>
<dbReference type="GO" id="GO:0004523">
    <property type="term" value="F:RNA-DNA hybrid ribonuclease activity"/>
    <property type="evidence" value="ECO:0007669"/>
    <property type="project" value="UniProtKB-UniRule"/>
</dbReference>
<dbReference type="GO" id="GO:0043137">
    <property type="term" value="P:DNA replication, removal of RNA primer"/>
    <property type="evidence" value="ECO:0007669"/>
    <property type="project" value="TreeGrafter"/>
</dbReference>
<dbReference type="GO" id="GO:0006298">
    <property type="term" value="P:mismatch repair"/>
    <property type="evidence" value="ECO:0007669"/>
    <property type="project" value="TreeGrafter"/>
</dbReference>
<dbReference type="CDD" id="cd07182">
    <property type="entry name" value="RNase_HII_bacteria_HII_like"/>
    <property type="match status" value="1"/>
</dbReference>
<dbReference type="FunFam" id="3.30.420.10:FF:000006">
    <property type="entry name" value="Ribonuclease HII"/>
    <property type="match status" value="1"/>
</dbReference>
<dbReference type="Gene3D" id="3.30.420.10">
    <property type="entry name" value="Ribonuclease H-like superfamily/Ribonuclease H"/>
    <property type="match status" value="1"/>
</dbReference>
<dbReference type="HAMAP" id="MF_00052_B">
    <property type="entry name" value="RNase_HII_B"/>
    <property type="match status" value="1"/>
</dbReference>
<dbReference type="InterPro" id="IPR022898">
    <property type="entry name" value="RNase_HII"/>
</dbReference>
<dbReference type="InterPro" id="IPR001352">
    <property type="entry name" value="RNase_HII/HIII"/>
</dbReference>
<dbReference type="InterPro" id="IPR024567">
    <property type="entry name" value="RNase_HII/HIII_dom"/>
</dbReference>
<dbReference type="InterPro" id="IPR012337">
    <property type="entry name" value="RNaseH-like_sf"/>
</dbReference>
<dbReference type="InterPro" id="IPR036397">
    <property type="entry name" value="RNaseH_sf"/>
</dbReference>
<dbReference type="NCBIfam" id="NF000594">
    <property type="entry name" value="PRK00015.1-1"/>
    <property type="match status" value="1"/>
</dbReference>
<dbReference type="NCBIfam" id="NF000595">
    <property type="entry name" value="PRK00015.1-3"/>
    <property type="match status" value="1"/>
</dbReference>
<dbReference type="PANTHER" id="PTHR10954">
    <property type="entry name" value="RIBONUCLEASE H2 SUBUNIT A"/>
    <property type="match status" value="1"/>
</dbReference>
<dbReference type="PANTHER" id="PTHR10954:SF18">
    <property type="entry name" value="RIBONUCLEASE HII"/>
    <property type="match status" value="1"/>
</dbReference>
<dbReference type="Pfam" id="PF01351">
    <property type="entry name" value="RNase_HII"/>
    <property type="match status" value="1"/>
</dbReference>
<dbReference type="SUPFAM" id="SSF53098">
    <property type="entry name" value="Ribonuclease H-like"/>
    <property type="match status" value="1"/>
</dbReference>
<dbReference type="PROSITE" id="PS51975">
    <property type="entry name" value="RNASE_H_2"/>
    <property type="match status" value="1"/>
</dbReference>
<name>RNH2_STRPS</name>
<reference key="1">
    <citation type="journal article" date="2009" name="BMC Genomics">
        <title>Genome evolution driven by host adaptations results in a more virulent and antimicrobial-resistant Streptococcus pneumoniae serotype 14.</title>
        <authorList>
            <person name="Ding F."/>
            <person name="Tang P."/>
            <person name="Hsu M.-H."/>
            <person name="Cui P."/>
            <person name="Hu S."/>
            <person name="Yu J."/>
            <person name="Chiu C.-H."/>
        </authorList>
    </citation>
    <scope>NUCLEOTIDE SEQUENCE [LARGE SCALE GENOMIC DNA]</scope>
    <source>
        <strain>CGSP14</strain>
    </source>
</reference>
<protein>
    <recommendedName>
        <fullName evidence="1">Ribonuclease HII</fullName>
        <shortName evidence="1">RNase HII</shortName>
        <ecNumber evidence="1">3.1.26.4</ecNumber>
    </recommendedName>
</protein>
<accession>B2IPW8</accession>